<feature type="chain" id="PRO_0000104640" description="Large ribosomal subunit protein uL30x">
    <location>
        <begin position="1"/>
        <end position="242"/>
    </location>
</feature>
<name>RL73_ARATH</name>
<protein>
    <recommendedName>
        <fullName evidence="1">Large ribosomal subunit protein uL30x</fullName>
    </recommendedName>
    <alternativeName>
        <fullName>60S ribosomal protein L7-3</fullName>
    </alternativeName>
</protein>
<dbReference type="EMBL" id="AC004005">
    <property type="protein sequence ID" value="AAC23430.1"/>
    <property type="status" value="ALT_INIT"/>
    <property type="molecule type" value="Genomic_DNA"/>
</dbReference>
<dbReference type="EMBL" id="CP002685">
    <property type="protein sequence ID" value="AEC10378.1"/>
    <property type="molecule type" value="Genomic_DNA"/>
</dbReference>
<dbReference type="EMBL" id="AY052724">
    <property type="protein sequence ID" value="AAK96628.1"/>
    <property type="molecule type" value="mRNA"/>
</dbReference>
<dbReference type="EMBL" id="AF446884">
    <property type="protein sequence ID" value="AAL38617.1"/>
    <property type="molecule type" value="mRNA"/>
</dbReference>
<dbReference type="EMBL" id="AY065196">
    <property type="protein sequence ID" value="AAL38372.1"/>
    <property type="molecule type" value="mRNA"/>
</dbReference>
<dbReference type="EMBL" id="AY081474">
    <property type="protein sequence ID" value="AAM10036.1"/>
    <property type="molecule type" value="mRNA"/>
</dbReference>
<dbReference type="EMBL" id="BT002379">
    <property type="protein sequence ID" value="AAO00739.1"/>
    <property type="molecule type" value="mRNA"/>
</dbReference>
<dbReference type="EMBL" id="AY087583">
    <property type="protein sequence ID" value="AAM65125.1"/>
    <property type="molecule type" value="mRNA"/>
</dbReference>
<dbReference type="PIR" id="T00692">
    <property type="entry name" value="T00692"/>
</dbReference>
<dbReference type="RefSeq" id="NP_850410.1">
    <molecule id="P60039-1"/>
    <property type="nucleotide sequence ID" value="NM_180079.4"/>
</dbReference>
<dbReference type="RefSeq" id="NP_850411.1">
    <property type="nucleotide sequence ID" value="NM_180080.2"/>
</dbReference>
<dbReference type="SMR" id="P60039"/>
<dbReference type="BioGRID" id="4354">
    <property type="interactions" value="168"/>
</dbReference>
<dbReference type="FunCoup" id="P60039">
    <property type="interactions" value="3657"/>
</dbReference>
<dbReference type="STRING" id="3702.P60039"/>
<dbReference type="iPTMnet" id="P60039"/>
<dbReference type="PaxDb" id="3702-AT2G44120.2"/>
<dbReference type="EnsemblPlants" id="AT2G44120.1">
    <molecule id="P60039-1"/>
    <property type="protein sequence ID" value="AT2G44120.1"/>
    <property type="gene ID" value="AT2G44120"/>
</dbReference>
<dbReference type="GeneID" id="819018"/>
<dbReference type="Gramene" id="AT2G44120.1">
    <molecule id="P60039-1"/>
    <property type="protein sequence ID" value="AT2G44120.1"/>
    <property type="gene ID" value="AT2G44120"/>
</dbReference>
<dbReference type="KEGG" id="ath:AT2G44120"/>
<dbReference type="Araport" id="AT2G44120"/>
<dbReference type="TAIR" id="AT2G44120"/>
<dbReference type="eggNOG" id="KOG3184">
    <property type="taxonomic scope" value="Eukaryota"/>
</dbReference>
<dbReference type="HOGENOM" id="CLU_055156_0_2_1"/>
<dbReference type="InParanoid" id="P60039"/>
<dbReference type="OrthoDB" id="28644at2759"/>
<dbReference type="PhylomeDB" id="P60039"/>
<dbReference type="CD-CODE" id="4299E36E">
    <property type="entry name" value="Nucleolus"/>
</dbReference>
<dbReference type="PRO" id="PR:P60039"/>
<dbReference type="Proteomes" id="UP000006548">
    <property type="component" value="Chromosome 2"/>
</dbReference>
<dbReference type="ExpressionAtlas" id="P60039">
    <property type="expression patterns" value="baseline and differential"/>
</dbReference>
<dbReference type="GO" id="GO:1990904">
    <property type="term" value="C:ribonucleoprotein complex"/>
    <property type="evidence" value="ECO:0007669"/>
    <property type="project" value="UniProtKB-KW"/>
</dbReference>
<dbReference type="GO" id="GO:0005840">
    <property type="term" value="C:ribosome"/>
    <property type="evidence" value="ECO:0007669"/>
    <property type="project" value="UniProtKB-KW"/>
</dbReference>
<dbReference type="GO" id="GO:0003723">
    <property type="term" value="F:RNA binding"/>
    <property type="evidence" value="ECO:0007669"/>
    <property type="project" value="InterPro"/>
</dbReference>
<dbReference type="GO" id="GO:0003735">
    <property type="term" value="F:structural constituent of ribosome"/>
    <property type="evidence" value="ECO:0007669"/>
    <property type="project" value="InterPro"/>
</dbReference>
<dbReference type="GO" id="GO:0000463">
    <property type="term" value="P:maturation of LSU-rRNA from tricistronic rRNA transcript (SSU-rRNA, 5.8S rRNA, LSU-rRNA)"/>
    <property type="evidence" value="ECO:0007669"/>
    <property type="project" value="InterPro"/>
</dbReference>
<dbReference type="CDD" id="cd01657">
    <property type="entry name" value="Ribosomal_L7_archeal_euk"/>
    <property type="match status" value="1"/>
</dbReference>
<dbReference type="FunFam" id="3.30.1390.20:FF:000002">
    <property type="entry name" value="60S ribosomal protein L7"/>
    <property type="match status" value="1"/>
</dbReference>
<dbReference type="FunFam" id="3.30.1390.20:FF:000003">
    <property type="entry name" value="60S ribosomal protein L7"/>
    <property type="match status" value="1"/>
</dbReference>
<dbReference type="Gene3D" id="3.30.1390.20">
    <property type="entry name" value="Ribosomal protein L30, ferredoxin-like fold domain"/>
    <property type="match status" value="1"/>
</dbReference>
<dbReference type="InterPro" id="IPR036919">
    <property type="entry name" value="Ribo_uL30_ferredoxin-like_sf"/>
</dbReference>
<dbReference type="InterPro" id="IPR039699">
    <property type="entry name" value="Ribosomal_uL30"/>
</dbReference>
<dbReference type="InterPro" id="IPR018038">
    <property type="entry name" value="Ribosomal_uL30_CS"/>
</dbReference>
<dbReference type="InterPro" id="IPR005998">
    <property type="entry name" value="Ribosomal_uL30_euk"/>
</dbReference>
<dbReference type="InterPro" id="IPR035808">
    <property type="entry name" value="Ribosomal_uL30_euk_arc"/>
</dbReference>
<dbReference type="InterPro" id="IPR016082">
    <property type="entry name" value="Ribosomal_uL30_ferredoxin-like"/>
</dbReference>
<dbReference type="InterPro" id="IPR012988">
    <property type="entry name" value="Ribosomal_uL30_N_euk"/>
</dbReference>
<dbReference type="NCBIfam" id="TIGR01310">
    <property type="entry name" value="uL30_euk"/>
    <property type="match status" value="1"/>
</dbReference>
<dbReference type="PANTHER" id="PTHR11524">
    <property type="entry name" value="60S RIBOSOMAL PROTEIN L7"/>
    <property type="match status" value="1"/>
</dbReference>
<dbReference type="PANTHER" id="PTHR11524:SF39">
    <property type="entry name" value="LARGE RIBOSOMAL SUBUNIT PROTEIN UL30W-RELATED"/>
    <property type="match status" value="1"/>
</dbReference>
<dbReference type="Pfam" id="PF00327">
    <property type="entry name" value="Ribosomal_L30"/>
    <property type="match status" value="1"/>
</dbReference>
<dbReference type="Pfam" id="PF08079">
    <property type="entry name" value="Ribosomal_L30_N"/>
    <property type="match status" value="1"/>
</dbReference>
<dbReference type="SUPFAM" id="SSF55129">
    <property type="entry name" value="Ribosomal protein L30p/L7e"/>
    <property type="match status" value="1"/>
</dbReference>
<dbReference type="PROSITE" id="PS00634">
    <property type="entry name" value="RIBOSOMAL_L30"/>
    <property type="match status" value="1"/>
</dbReference>
<gene>
    <name type="primary">RPL7C</name>
    <name type="ordered locus">At2g44120</name>
    <name type="ORF">F6E13.25</name>
</gene>
<keyword id="KW-0025">Alternative splicing</keyword>
<keyword id="KW-1185">Reference proteome</keyword>
<keyword id="KW-0687">Ribonucleoprotein</keyword>
<keyword id="KW-0689">Ribosomal protein</keyword>
<organism>
    <name type="scientific">Arabidopsis thaliana</name>
    <name type="common">Mouse-ear cress</name>
    <dbReference type="NCBI Taxonomy" id="3702"/>
    <lineage>
        <taxon>Eukaryota</taxon>
        <taxon>Viridiplantae</taxon>
        <taxon>Streptophyta</taxon>
        <taxon>Embryophyta</taxon>
        <taxon>Tracheophyta</taxon>
        <taxon>Spermatophyta</taxon>
        <taxon>Magnoliopsida</taxon>
        <taxon>eudicotyledons</taxon>
        <taxon>Gunneridae</taxon>
        <taxon>Pentapetalae</taxon>
        <taxon>rosids</taxon>
        <taxon>malvids</taxon>
        <taxon>Brassicales</taxon>
        <taxon>Brassicaceae</taxon>
        <taxon>Camelineae</taxon>
        <taxon>Arabidopsis</taxon>
    </lineage>
</organism>
<reference key="1">
    <citation type="journal article" date="1999" name="Nature">
        <title>Sequence and analysis of chromosome 2 of the plant Arabidopsis thaliana.</title>
        <authorList>
            <person name="Lin X."/>
            <person name="Kaul S."/>
            <person name="Rounsley S.D."/>
            <person name="Shea T.P."/>
            <person name="Benito M.-I."/>
            <person name="Town C.D."/>
            <person name="Fujii C.Y."/>
            <person name="Mason T.M."/>
            <person name="Bowman C.L."/>
            <person name="Barnstead M.E."/>
            <person name="Feldblyum T.V."/>
            <person name="Buell C.R."/>
            <person name="Ketchum K.A."/>
            <person name="Lee J.J."/>
            <person name="Ronning C.M."/>
            <person name="Koo H.L."/>
            <person name="Moffat K.S."/>
            <person name="Cronin L.A."/>
            <person name="Shen M."/>
            <person name="Pai G."/>
            <person name="Van Aken S."/>
            <person name="Umayam L."/>
            <person name="Tallon L.J."/>
            <person name="Gill J.E."/>
            <person name="Adams M.D."/>
            <person name="Carrera A.J."/>
            <person name="Creasy T.H."/>
            <person name="Goodman H.M."/>
            <person name="Somerville C.R."/>
            <person name="Copenhaver G.P."/>
            <person name="Preuss D."/>
            <person name="Nierman W.C."/>
            <person name="White O."/>
            <person name="Eisen J.A."/>
            <person name="Salzberg S.L."/>
            <person name="Fraser C.M."/>
            <person name="Venter J.C."/>
        </authorList>
    </citation>
    <scope>NUCLEOTIDE SEQUENCE [LARGE SCALE GENOMIC DNA]</scope>
    <source>
        <strain>cv. Columbia</strain>
    </source>
</reference>
<reference key="2">
    <citation type="journal article" date="2017" name="Plant J.">
        <title>Araport11: a complete reannotation of the Arabidopsis thaliana reference genome.</title>
        <authorList>
            <person name="Cheng C.Y."/>
            <person name="Krishnakumar V."/>
            <person name="Chan A.P."/>
            <person name="Thibaud-Nissen F."/>
            <person name="Schobel S."/>
            <person name="Town C.D."/>
        </authorList>
    </citation>
    <scope>GENOME REANNOTATION</scope>
    <source>
        <strain>cv. Columbia</strain>
    </source>
</reference>
<reference key="3">
    <citation type="journal article" date="2003" name="Science">
        <title>Empirical analysis of transcriptional activity in the Arabidopsis genome.</title>
        <authorList>
            <person name="Yamada K."/>
            <person name="Lim J."/>
            <person name="Dale J.M."/>
            <person name="Chen H."/>
            <person name="Shinn P."/>
            <person name="Palm C.J."/>
            <person name="Southwick A.M."/>
            <person name="Wu H.C."/>
            <person name="Kim C.J."/>
            <person name="Nguyen M."/>
            <person name="Pham P.K."/>
            <person name="Cheuk R.F."/>
            <person name="Karlin-Newmann G."/>
            <person name="Liu S.X."/>
            <person name="Lam B."/>
            <person name="Sakano H."/>
            <person name="Wu T."/>
            <person name="Yu G."/>
            <person name="Miranda M."/>
            <person name="Quach H.L."/>
            <person name="Tripp M."/>
            <person name="Chang C.H."/>
            <person name="Lee J.M."/>
            <person name="Toriumi M.J."/>
            <person name="Chan M.M."/>
            <person name="Tang C.C."/>
            <person name="Onodera C.S."/>
            <person name="Deng J.M."/>
            <person name="Akiyama K."/>
            <person name="Ansari Y."/>
            <person name="Arakawa T."/>
            <person name="Banh J."/>
            <person name="Banno F."/>
            <person name="Bowser L."/>
            <person name="Brooks S.Y."/>
            <person name="Carninci P."/>
            <person name="Chao Q."/>
            <person name="Choy N."/>
            <person name="Enju A."/>
            <person name="Goldsmith A.D."/>
            <person name="Gurjal M."/>
            <person name="Hansen N.F."/>
            <person name="Hayashizaki Y."/>
            <person name="Johnson-Hopson C."/>
            <person name="Hsuan V.W."/>
            <person name="Iida K."/>
            <person name="Karnes M."/>
            <person name="Khan S."/>
            <person name="Koesema E."/>
            <person name="Ishida J."/>
            <person name="Jiang P.X."/>
            <person name="Jones T."/>
            <person name="Kawai J."/>
            <person name="Kamiya A."/>
            <person name="Meyers C."/>
            <person name="Nakajima M."/>
            <person name="Narusaka M."/>
            <person name="Seki M."/>
            <person name="Sakurai T."/>
            <person name="Satou M."/>
            <person name="Tamse R."/>
            <person name="Vaysberg M."/>
            <person name="Wallender E.K."/>
            <person name="Wong C."/>
            <person name="Yamamura Y."/>
            <person name="Yuan S."/>
            <person name="Shinozaki K."/>
            <person name="Davis R.W."/>
            <person name="Theologis A."/>
            <person name="Ecker J.R."/>
        </authorList>
    </citation>
    <scope>NUCLEOTIDE SEQUENCE [LARGE SCALE MRNA]</scope>
    <source>
        <strain>cv. Columbia</strain>
    </source>
</reference>
<reference key="4">
    <citation type="submission" date="2002-03" db="EMBL/GenBank/DDBJ databases">
        <title>Full-length cDNA from Arabidopsis thaliana.</title>
        <authorList>
            <person name="Brover V.V."/>
            <person name="Troukhan M.E."/>
            <person name="Alexandrov N.A."/>
            <person name="Lu Y.-P."/>
            <person name="Flavell R.B."/>
            <person name="Feldmann K.A."/>
        </authorList>
    </citation>
    <scope>NUCLEOTIDE SEQUENCE [LARGE SCALE MRNA]</scope>
</reference>
<reference key="5">
    <citation type="journal article" date="2001" name="Plant Physiol.">
        <title>The organization of cytoplasmic ribosomal protein genes in the Arabidopsis genome.</title>
        <authorList>
            <person name="Barakat A."/>
            <person name="Szick-Miranda K."/>
            <person name="Chang I.-F."/>
            <person name="Guyot R."/>
            <person name="Blanc G."/>
            <person name="Cooke R."/>
            <person name="Delseny M."/>
            <person name="Bailey-Serres J."/>
        </authorList>
    </citation>
    <scope>GENE FAMILY ORGANIZATION</scope>
    <scope>NOMENCLATURE</scope>
</reference>
<reference key="6">
    <citation type="journal article" date="2023" name="Plant Cell">
        <title>An updated nomenclature for plant ribosomal protein genes.</title>
        <authorList>
            <person name="Scarpin M.R."/>
            <person name="Busche M."/>
            <person name="Martinez R.E."/>
            <person name="Harper L.C."/>
            <person name="Reiser L."/>
            <person name="Szakonyi D."/>
            <person name="Merchante C."/>
            <person name="Lan T."/>
            <person name="Xiong W."/>
            <person name="Mo B."/>
            <person name="Tang G."/>
            <person name="Chen X."/>
            <person name="Bailey-Serres J."/>
            <person name="Browning K.S."/>
            <person name="Brunkard J.O."/>
        </authorList>
    </citation>
    <scope>NOMENCLATURE</scope>
</reference>
<sequence>MAESKVVVPESVLKKIKRQEEWALAKKDEAVAAKKKSVEARKLIFKRAEQYAKEYAEKDNELIRLKREAKLKGGFYVDPEAKLLFIIRIRGINAIDPKTKKILQLLRLRQIFNGVFLKVNKATVNMLRRVEPYVTYGYPNLKSVKELIYKRGYGKLNHQRIALTDNSIVDQALGKHGIICVEDLIHEIMTVGPHFKEANNFLWPFQLKAPLGGLKKKRNHYVEGGDAGNRENFINELVRRMN</sequence>
<proteinExistence type="evidence at transcript level"/>
<accession>P60039</accession>
<accession>O80581</accession>
<accession>Q42208</accession>
<accession>Q8GUM7</accession>
<accession>Q940T2</accession>
<comment type="alternative products">
    <event type="alternative splicing"/>
    <isoform>
        <id>P60039-1</id>
        <name>1</name>
        <sequence type="displayed"/>
    </isoform>
    <text>A number of isoforms are produced. According to EST sequences.</text>
</comment>
<comment type="similarity">
    <text evidence="2">Belongs to the universal ribosomal protein uL30 family.</text>
</comment>
<comment type="sequence caution" evidence="2">
    <conflict type="erroneous initiation">
        <sequence resource="EMBL-CDS" id="AAC23430"/>
    </conflict>
</comment>
<evidence type="ECO:0000303" key="1">
    <source>
    </source>
</evidence>
<evidence type="ECO:0000305" key="2"/>